<gene>
    <name type="ORF">SPAC17A2.10c</name>
</gene>
<reference key="1">
    <citation type="journal article" date="2002" name="Nature">
        <title>The genome sequence of Schizosaccharomyces pombe.</title>
        <authorList>
            <person name="Wood V."/>
            <person name="Gwilliam R."/>
            <person name="Rajandream M.A."/>
            <person name="Lyne M.H."/>
            <person name="Lyne R."/>
            <person name="Stewart A."/>
            <person name="Sgouros J.G."/>
            <person name="Peat N."/>
            <person name="Hayles J."/>
            <person name="Baker S.G."/>
            <person name="Basham D."/>
            <person name="Bowman S."/>
            <person name="Brooks K."/>
            <person name="Brown D."/>
            <person name="Brown S."/>
            <person name="Chillingworth T."/>
            <person name="Churcher C.M."/>
            <person name="Collins M."/>
            <person name="Connor R."/>
            <person name="Cronin A."/>
            <person name="Davis P."/>
            <person name="Feltwell T."/>
            <person name="Fraser A."/>
            <person name="Gentles S."/>
            <person name="Goble A."/>
            <person name="Hamlin N."/>
            <person name="Harris D.E."/>
            <person name="Hidalgo J."/>
            <person name="Hodgson G."/>
            <person name="Holroyd S."/>
            <person name="Hornsby T."/>
            <person name="Howarth S."/>
            <person name="Huckle E.J."/>
            <person name="Hunt S."/>
            <person name="Jagels K."/>
            <person name="James K.D."/>
            <person name="Jones L."/>
            <person name="Jones M."/>
            <person name="Leather S."/>
            <person name="McDonald S."/>
            <person name="McLean J."/>
            <person name="Mooney P."/>
            <person name="Moule S."/>
            <person name="Mungall K.L."/>
            <person name="Murphy L.D."/>
            <person name="Niblett D."/>
            <person name="Odell C."/>
            <person name="Oliver K."/>
            <person name="O'Neil S."/>
            <person name="Pearson D."/>
            <person name="Quail M.A."/>
            <person name="Rabbinowitsch E."/>
            <person name="Rutherford K.M."/>
            <person name="Rutter S."/>
            <person name="Saunders D."/>
            <person name="Seeger K."/>
            <person name="Sharp S."/>
            <person name="Skelton J."/>
            <person name="Simmonds M.N."/>
            <person name="Squares R."/>
            <person name="Squares S."/>
            <person name="Stevens K."/>
            <person name="Taylor K."/>
            <person name="Taylor R.G."/>
            <person name="Tivey A."/>
            <person name="Walsh S.V."/>
            <person name="Warren T."/>
            <person name="Whitehead S."/>
            <person name="Woodward J.R."/>
            <person name="Volckaert G."/>
            <person name="Aert R."/>
            <person name="Robben J."/>
            <person name="Grymonprez B."/>
            <person name="Weltjens I."/>
            <person name="Vanstreels E."/>
            <person name="Rieger M."/>
            <person name="Schaefer M."/>
            <person name="Mueller-Auer S."/>
            <person name="Gabel C."/>
            <person name="Fuchs M."/>
            <person name="Duesterhoeft A."/>
            <person name="Fritzc C."/>
            <person name="Holzer E."/>
            <person name="Moestl D."/>
            <person name="Hilbert H."/>
            <person name="Borzym K."/>
            <person name="Langer I."/>
            <person name="Beck A."/>
            <person name="Lehrach H."/>
            <person name="Reinhardt R."/>
            <person name="Pohl T.M."/>
            <person name="Eger P."/>
            <person name="Zimmermann W."/>
            <person name="Wedler H."/>
            <person name="Wambutt R."/>
            <person name="Purnelle B."/>
            <person name="Goffeau A."/>
            <person name="Cadieu E."/>
            <person name="Dreano S."/>
            <person name="Gloux S."/>
            <person name="Lelaure V."/>
            <person name="Mottier S."/>
            <person name="Galibert F."/>
            <person name="Aves S.J."/>
            <person name="Xiang Z."/>
            <person name="Hunt C."/>
            <person name="Moore K."/>
            <person name="Hurst S.M."/>
            <person name="Lucas M."/>
            <person name="Rochet M."/>
            <person name="Gaillardin C."/>
            <person name="Tallada V.A."/>
            <person name="Garzon A."/>
            <person name="Thode G."/>
            <person name="Daga R.R."/>
            <person name="Cruzado L."/>
            <person name="Jimenez J."/>
            <person name="Sanchez M."/>
            <person name="del Rey F."/>
            <person name="Benito J."/>
            <person name="Dominguez A."/>
            <person name="Revuelta J.L."/>
            <person name="Moreno S."/>
            <person name="Armstrong J."/>
            <person name="Forsburg S.L."/>
            <person name="Cerutti L."/>
            <person name="Lowe T."/>
            <person name="McCombie W.R."/>
            <person name="Paulsen I."/>
            <person name="Potashkin J."/>
            <person name="Shpakovski G.V."/>
            <person name="Ussery D."/>
            <person name="Barrell B.G."/>
            <person name="Nurse P."/>
        </authorList>
    </citation>
    <scope>NUCLEOTIDE SEQUENCE [LARGE SCALE GENOMIC DNA]</scope>
    <source>
        <strain>972 / ATCC 24843</strain>
    </source>
</reference>
<reference key="2">
    <citation type="journal article" date="2006" name="Nat. Biotechnol.">
        <title>ORFeome cloning and global analysis of protein localization in the fission yeast Schizosaccharomyces pombe.</title>
        <authorList>
            <person name="Matsuyama A."/>
            <person name="Arai R."/>
            <person name="Yashiroda Y."/>
            <person name="Shirai A."/>
            <person name="Kamata A."/>
            <person name="Sekido S."/>
            <person name="Kobayashi Y."/>
            <person name="Hashimoto A."/>
            <person name="Hamamoto M."/>
            <person name="Hiraoka Y."/>
            <person name="Horinouchi S."/>
            <person name="Yoshida M."/>
        </authorList>
    </citation>
    <scope>SUBCELLULAR LOCATION [LARGE SCALE ANALYSIS]</scope>
</reference>
<feature type="signal peptide" evidence="1">
    <location>
        <begin position="1"/>
        <end position="16"/>
    </location>
</feature>
<feature type="chain" id="PRO_0000304010" description="Uncharacterized membrane protein C17A2.10c">
    <location>
        <begin position="17"/>
        <end position="230"/>
    </location>
</feature>
<feature type="transmembrane region" description="Helical" evidence="1">
    <location>
        <begin position="27"/>
        <end position="47"/>
    </location>
</feature>
<feature type="transmembrane region" description="Helical" evidence="1">
    <location>
        <begin position="118"/>
        <end position="138"/>
    </location>
</feature>
<feature type="transmembrane region" description="Helical" evidence="1">
    <location>
        <begin position="150"/>
        <end position="170"/>
    </location>
</feature>
<feature type="transmembrane region" description="Helical" evidence="1">
    <location>
        <begin position="172"/>
        <end position="191"/>
    </location>
</feature>
<comment type="subcellular location">
    <subcellularLocation>
        <location evidence="2">Cytoplasm</location>
    </subcellularLocation>
    <subcellularLocation>
        <location evidence="2">Nucleus membrane</location>
        <topology evidence="2">Multi-pass membrane protein</topology>
    </subcellularLocation>
</comment>
<accession>O13760</accession>
<proteinExistence type="inferred from homology"/>
<keyword id="KW-0963">Cytoplasm</keyword>
<keyword id="KW-0472">Membrane</keyword>
<keyword id="KW-0539">Nucleus</keyword>
<keyword id="KW-1185">Reference proteome</keyword>
<keyword id="KW-0732">Signal</keyword>
<keyword id="KW-0812">Transmembrane</keyword>
<keyword id="KW-1133">Transmembrane helix</keyword>
<evidence type="ECO:0000255" key="1"/>
<evidence type="ECO:0000269" key="2">
    <source>
    </source>
</evidence>
<organism>
    <name type="scientific">Schizosaccharomyces pombe (strain 972 / ATCC 24843)</name>
    <name type="common">Fission yeast</name>
    <dbReference type="NCBI Taxonomy" id="284812"/>
    <lineage>
        <taxon>Eukaryota</taxon>
        <taxon>Fungi</taxon>
        <taxon>Dikarya</taxon>
        <taxon>Ascomycota</taxon>
        <taxon>Taphrinomycotina</taxon>
        <taxon>Schizosaccharomycetes</taxon>
        <taxon>Schizosaccharomycetales</taxon>
        <taxon>Schizosaccharomycetaceae</taxon>
        <taxon>Schizosaccharomyces</taxon>
    </lineage>
</organism>
<name>YF2A_SCHPO</name>
<protein>
    <recommendedName>
        <fullName>Uncharacterized membrane protein C17A2.10c</fullName>
    </recommendedName>
</protein>
<sequence length="230" mass="26593">MTCVNVCFFLFPPCHRNKITEADKSLVDLLIPSLCCSLAVFPSIPLINTHSNLCLFSNFSHSCFLFCTHPDTLPTSLSINPKKLSLSFSFPLSQKRPFPNFLHPFTGSELSLFRCLLLFFFFLLFFLSFSFSFSFLFFLSQIFIVYFSSFPILHFLFFFFLCVCVFLSFLFSLSHLLSLAILFLPLLLRVFSTLSRLPRLFCLCLQKKRRVLIPFAFTSFRKIASLPCVC</sequence>
<dbReference type="EMBL" id="CU329670">
    <property type="protein sequence ID" value="CAB16563.1"/>
    <property type="molecule type" value="Genomic_DNA"/>
</dbReference>
<dbReference type="PIR" id="T37811">
    <property type="entry name" value="T37811"/>
</dbReference>
<dbReference type="RefSeq" id="NP_594244.1">
    <property type="nucleotide sequence ID" value="NM_001019667.1"/>
</dbReference>
<dbReference type="SMR" id="O13760"/>
<dbReference type="PaxDb" id="4896-SPAC17A2.10c.1"/>
<dbReference type="EnsemblFungi" id="SPAC17A2.10c.1">
    <property type="protein sequence ID" value="SPAC17A2.10c.1:pep"/>
    <property type="gene ID" value="SPAC17A2.10c"/>
</dbReference>
<dbReference type="KEGG" id="spo:2542210"/>
<dbReference type="PomBase" id="SPAC17A2.10c"/>
<dbReference type="VEuPathDB" id="FungiDB:SPAC17A2.10c"/>
<dbReference type="HOGENOM" id="CLU_1205363_0_0_1"/>
<dbReference type="InParanoid" id="O13760"/>
<dbReference type="PRO" id="PR:O13760"/>
<dbReference type="Proteomes" id="UP000002485">
    <property type="component" value="Chromosome I"/>
</dbReference>
<dbReference type="GO" id="GO:0005737">
    <property type="term" value="C:cytoplasm"/>
    <property type="evidence" value="ECO:0007669"/>
    <property type="project" value="UniProtKB-SubCell"/>
</dbReference>
<dbReference type="GO" id="GO:0031965">
    <property type="term" value="C:nuclear membrane"/>
    <property type="evidence" value="ECO:0007669"/>
    <property type="project" value="UniProtKB-SubCell"/>
</dbReference>